<dbReference type="EC" id="2.5.1.39" evidence="1"/>
<dbReference type="EMBL" id="AE016853">
    <property type="protein sequence ID" value="AAO58895.1"/>
    <property type="molecule type" value="Genomic_DNA"/>
</dbReference>
<dbReference type="RefSeq" id="NP_795200.1">
    <property type="nucleotide sequence ID" value="NC_004578.1"/>
</dbReference>
<dbReference type="RefSeq" id="WP_007245012.1">
    <property type="nucleotide sequence ID" value="NC_004578.1"/>
</dbReference>
<dbReference type="SMR" id="Q87U39"/>
<dbReference type="STRING" id="223283.PSPTO_5476"/>
<dbReference type="GeneID" id="1187168"/>
<dbReference type="KEGG" id="pst:PSPTO_5476"/>
<dbReference type="PATRIC" id="fig|223283.9.peg.5610"/>
<dbReference type="eggNOG" id="COG0382">
    <property type="taxonomic scope" value="Bacteria"/>
</dbReference>
<dbReference type="HOGENOM" id="CLU_034879_1_0_6"/>
<dbReference type="OrthoDB" id="9782418at2"/>
<dbReference type="PhylomeDB" id="Q87U39"/>
<dbReference type="UniPathway" id="UPA00232"/>
<dbReference type="Proteomes" id="UP000002515">
    <property type="component" value="Chromosome"/>
</dbReference>
<dbReference type="GO" id="GO:0005886">
    <property type="term" value="C:plasma membrane"/>
    <property type="evidence" value="ECO:0007669"/>
    <property type="project" value="UniProtKB-SubCell"/>
</dbReference>
<dbReference type="GO" id="GO:0008412">
    <property type="term" value="F:4-hydroxybenzoate polyprenyltransferase activity"/>
    <property type="evidence" value="ECO:0007669"/>
    <property type="project" value="UniProtKB-UniRule"/>
</dbReference>
<dbReference type="GO" id="GO:0006744">
    <property type="term" value="P:ubiquinone biosynthetic process"/>
    <property type="evidence" value="ECO:0007669"/>
    <property type="project" value="UniProtKB-UniRule"/>
</dbReference>
<dbReference type="CDD" id="cd13959">
    <property type="entry name" value="PT_UbiA_COQ2"/>
    <property type="match status" value="1"/>
</dbReference>
<dbReference type="FunFam" id="1.10.357.140:FF:000002">
    <property type="entry name" value="4-hydroxybenzoate octaprenyltransferase"/>
    <property type="match status" value="1"/>
</dbReference>
<dbReference type="FunFam" id="1.20.120.1780:FF:000001">
    <property type="entry name" value="4-hydroxybenzoate octaprenyltransferase"/>
    <property type="match status" value="1"/>
</dbReference>
<dbReference type="Gene3D" id="1.10.357.140">
    <property type="entry name" value="UbiA prenyltransferase"/>
    <property type="match status" value="1"/>
</dbReference>
<dbReference type="Gene3D" id="1.20.120.1780">
    <property type="entry name" value="UbiA prenyltransferase"/>
    <property type="match status" value="1"/>
</dbReference>
<dbReference type="HAMAP" id="MF_01635">
    <property type="entry name" value="UbiA"/>
    <property type="match status" value="1"/>
</dbReference>
<dbReference type="InterPro" id="IPR006370">
    <property type="entry name" value="HB_polyprenyltransferase-like"/>
</dbReference>
<dbReference type="InterPro" id="IPR039653">
    <property type="entry name" value="Prenyltransferase"/>
</dbReference>
<dbReference type="InterPro" id="IPR000537">
    <property type="entry name" value="UbiA_prenyltransferase"/>
</dbReference>
<dbReference type="InterPro" id="IPR044878">
    <property type="entry name" value="UbiA_sf"/>
</dbReference>
<dbReference type="NCBIfam" id="TIGR01474">
    <property type="entry name" value="ubiA_proteo"/>
    <property type="match status" value="1"/>
</dbReference>
<dbReference type="PANTHER" id="PTHR11048:SF28">
    <property type="entry name" value="4-HYDROXYBENZOATE POLYPRENYLTRANSFERASE, MITOCHONDRIAL"/>
    <property type="match status" value="1"/>
</dbReference>
<dbReference type="PANTHER" id="PTHR11048">
    <property type="entry name" value="PRENYLTRANSFERASES"/>
    <property type="match status" value="1"/>
</dbReference>
<dbReference type="Pfam" id="PF01040">
    <property type="entry name" value="UbiA"/>
    <property type="match status" value="1"/>
</dbReference>
<proteinExistence type="inferred from homology"/>
<gene>
    <name evidence="1" type="primary">ubiA</name>
    <name type="ordered locus">PSPTO_5476</name>
</gene>
<evidence type="ECO:0000255" key="1">
    <source>
        <dbReference type="HAMAP-Rule" id="MF_01635"/>
    </source>
</evidence>
<keyword id="KW-0997">Cell inner membrane</keyword>
<keyword id="KW-1003">Cell membrane</keyword>
<keyword id="KW-0460">Magnesium</keyword>
<keyword id="KW-0472">Membrane</keyword>
<keyword id="KW-1185">Reference proteome</keyword>
<keyword id="KW-0808">Transferase</keyword>
<keyword id="KW-0812">Transmembrane</keyword>
<keyword id="KW-1133">Transmembrane helix</keyword>
<keyword id="KW-0831">Ubiquinone biosynthesis</keyword>
<comment type="function">
    <text evidence="1">Catalyzes the prenylation of para-hydroxybenzoate (PHB) with an all-trans polyprenyl group. Mediates the second step in the final reaction sequence of ubiquinone-8 (UQ-8) biosynthesis, which is the condensation of the polyisoprenoid side chain with PHB, generating the first membrane-bound Q intermediate 3-octaprenyl-4-hydroxybenzoate.</text>
</comment>
<comment type="catalytic activity">
    <reaction evidence="1">
        <text>all-trans-octaprenyl diphosphate + 4-hydroxybenzoate = 4-hydroxy-3-(all-trans-octaprenyl)benzoate + diphosphate</text>
        <dbReference type="Rhea" id="RHEA:27782"/>
        <dbReference type="ChEBI" id="CHEBI:1617"/>
        <dbReference type="ChEBI" id="CHEBI:17879"/>
        <dbReference type="ChEBI" id="CHEBI:33019"/>
        <dbReference type="ChEBI" id="CHEBI:57711"/>
        <dbReference type="EC" id="2.5.1.39"/>
    </reaction>
</comment>
<comment type="cofactor">
    <cofactor evidence="1">
        <name>Mg(2+)</name>
        <dbReference type="ChEBI" id="CHEBI:18420"/>
    </cofactor>
</comment>
<comment type="pathway">
    <text evidence="1">Cofactor biosynthesis; ubiquinone biosynthesis.</text>
</comment>
<comment type="subcellular location">
    <subcellularLocation>
        <location evidence="1">Cell inner membrane</location>
        <topology evidence="1">Multi-pass membrane protein</topology>
    </subcellularLocation>
</comment>
<comment type="similarity">
    <text evidence="1">Belongs to the UbiA prenyltransferase family.</text>
</comment>
<name>UBIA_PSESM</name>
<organism>
    <name type="scientific">Pseudomonas syringae pv. tomato (strain ATCC BAA-871 / DC3000)</name>
    <dbReference type="NCBI Taxonomy" id="223283"/>
    <lineage>
        <taxon>Bacteria</taxon>
        <taxon>Pseudomonadati</taxon>
        <taxon>Pseudomonadota</taxon>
        <taxon>Gammaproteobacteria</taxon>
        <taxon>Pseudomonadales</taxon>
        <taxon>Pseudomonadaceae</taxon>
        <taxon>Pseudomonas</taxon>
    </lineage>
</organism>
<protein>
    <recommendedName>
        <fullName evidence="1">4-hydroxybenzoate octaprenyltransferase</fullName>
        <ecNumber evidence="1">2.5.1.39</ecNumber>
    </recommendedName>
    <alternativeName>
        <fullName evidence="1">4-HB polyprenyltransferase</fullName>
    </alternativeName>
</protein>
<accession>Q87U39</accession>
<reference key="1">
    <citation type="journal article" date="2003" name="Proc. Natl. Acad. Sci. U.S.A.">
        <title>The complete genome sequence of the Arabidopsis and tomato pathogen Pseudomonas syringae pv. tomato DC3000.</title>
        <authorList>
            <person name="Buell C.R."/>
            <person name="Joardar V."/>
            <person name="Lindeberg M."/>
            <person name="Selengut J."/>
            <person name="Paulsen I.T."/>
            <person name="Gwinn M.L."/>
            <person name="Dodson R.J."/>
            <person name="DeBoy R.T."/>
            <person name="Durkin A.S."/>
            <person name="Kolonay J.F."/>
            <person name="Madupu R."/>
            <person name="Daugherty S.C."/>
            <person name="Brinkac L.M."/>
            <person name="Beanan M.J."/>
            <person name="Haft D.H."/>
            <person name="Nelson W.C."/>
            <person name="Davidsen T.M."/>
            <person name="Zafar N."/>
            <person name="Zhou L."/>
            <person name="Liu J."/>
            <person name="Yuan Q."/>
            <person name="Khouri H.M."/>
            <person name="Fedorova N.B."/>
            <person name="Tran B."/>
            <person name="Russell D."/>
            <person name="Berry K.J."/>
            <person name="Utterback T.R."/>
            <person name="Van Aken S.E."/>
            <person name="Feldblyum T.V."/>
            <person name="D'Ascenzo M."/>
            <person name="Deng W.-L."/>
            <person name="Ramos A.R."/>
            <person name="Alfano J.R."/>
            <person name="Cartinhour S."/>
            <person name="Chatterjee A.K."/>
            <person name="Delaney T.P."/>
            <person name="Lazarowitz S.G."/>
            <person name="Martin G.B."/>
            <person name="Schneider D.J."/>
            <person name="Tang X."/>
            <person name="Bender C.L."/>
            <person name="White O."/>
            <person name="Fraser C.M."/>
            <person name="Collmer A."/>
        </authorList>
    </citation>
    <scope>NUCLEOTIDE SEQUENCE [LARGE SCALE GENOMIC DNA]</scope>
    <source>
        <strain>ATCC BAA-871 / DC3000</strain>
    </source>
</reference>
<sequence length="296" mass="32938">MYLSLLKSLNRLSPRAWDFVQLTRIDKPIGIYLLLWPTLWAVWIAGKGSPSLNTVFIFVAGVFLMRAAGCVINDFADRKVDGHVKRTEQRPLVSGKVSSREALVLFAVLVSLSFVLVLFTNSTTIWLSFGGLALAACYPFMKRYTYYPQVVLGAAFSWGMPMAFTAETGELPAAAWLLYIANLLWTVGYDTYYAMVDRDDDLKIGVKSTAVLFGDADRVIILSLQGLALGCLALAGSRFELGAFFYMGLLVAAACFAWEFWSTRLRERDACFKAFLHNHWAGLAIFLGIVADYALR</sequence>
<feature type="chain" id="PRO_0000262825" description="4-hydroxybenzoate octaprenyltransferase">
    <location>
        <begin position="1"/>
        <end position="296"/>
    </location>
</feature>
<feature type="transmembrane region" description="Helical" evidence="1">
    <location>
        <begin position="28"/>
        <end position="48"/>
    </location>
</feature>
<feature type="transmembrane region" description="Helical" evidence="1">
    <location>
        <begin position="52"/>
        <end position="72"/>
    </location>
</feature>
<feature type="transmembrane region" description="Helical" evidence="1">
    <location>
        <begin position="102"/>
        <end position="122"/>
    </location>
</feature>
<feature type="transmembrane region" description="Helical" evidence="1">
    <location>
        <begin position="123"/>
        <end position="140"/>
    </location>
</feature>
<feature type="transmembrane region" description="Helical" evidence="1">
    <location>
        <begin position="146"/>
        <end position="166"/>
    </location>
</feature>
<feature type="transmembrane region" description="Helical" evidence="1">
    <location>
        <begin position="169"/>
        <end position="189"/>
    </location>
</feature>
<feature type="transmembrane region" description="Helical" evidence="1">
    <location>
        <begin position="219"/>
        <end position="239"/>
    </location>
</feature>
<feature type="transmembrane region" description="Helical" evidence="1">
    <location>
        <begin position="241"/>
        <end position="261"/>
    </location>
</feature>
<feature type="transmembrane region" description="Helical" evidence="1">
    <location>
        <begin position="275"/>
        <end position="295"/>
    </location>
</feature>